<keyword id="KW-0067">ATP-binding</keyword>
<keyword id="KW-0460">Magnesium</keyword>
<keyword id="KW-0547">Nucleotide-binding</keyword>
<keyword id="KW-0554">One-carbon metabolism</keyword>
<keyword id="KW-0808">Transferase</keyword>
<accession>C4KIY2</accession>
<reference key="1">
    <citation type="journal article" date="2009" name="Proc. Natl. Acad. Sci. U.S.A.">
        <title>Biogeography of the Sulfolobus islandicus pan-genome.</title>
        <authorList>
            <person name="Reno M.L."/>
            <person name="Held N.L."/>
            <person name="Fields C.J."/>
            <person name="Burke P.V."/>
            <person name="Whitaker R.J."/>
        </authorList>
    </citation>
    <scope>NUCLEOTIDE SEQUENCE [LARGE SCALE GENOMIC DNA]</scope>
    <source>
        <strain>M.16.4 / Kamchatka #3</strain>
    </source>
</reference>
<dbReference type="EC" id="2.5.1.6" evidence="1"/>
<dbReference type="EMBL" id="CP001402">
    <property type="protein sequence ID" value="ACR42546.1"/>
    <property type="molecule type" value="Genomic_DNA"/>
</dbReference>
<dbReference type="RefSeq" id="WP_012711906.1">
    <property type="nucleotide sequence ID" value="NC_012726.1"/>
</dbReference>
<dbReference type="SMR" id="C4KIY2"/>
<dbReference type="KEGG" id="sid:M164_1943"/>
<dbReference type="HOGENOM" id="CLU_057642_0_0_2"/>
<dbReference type="UniPathway" id="UPA00315">
    <property type="reaction ID" value="UER00080"/>
</dbReference>
<dbReference type="Proteomes" id="UP000001479">
    <property type="component" value="Chromosome"/>
</dbReference>
<dbReference type="GO" id="GO:0005524">
    <property type="term" value="F:ATP binding"/>
    <property type="evidence" value="ECO:0007669"/>
    <property type="project" value="UniProtKB-UniRule"/>
</dbReference>
<dbReference type="GO" id="GO:0000287">
    <property type="term" value="F:magnesium ion binding"/>
    <property type="evidence" value="ECO:0007669"/>
    <property type="project" value="UniProtKB-UniRule"/>
</dbReference>
<dbReference type="GO" id="GO:0004478">
    <property type="term" value="F:methionine adenosyltransferase activity"/>
    <property type="evidence" value="ECO:0007669"/>
    <property type="project" value="UniProtKB-UniRule"/>
</dbReference>
<dbReference type="GO" id="GO:0006730">
    <property type="term" value="P:one-carbon metabolic process"/>
    <property type="evidence" value="ECO:0007669"/>
    <property type="project" value="UniProtKB-KW"/>
</dbReference>
<dbReference type="GO" id="GO:0006556">
    <property type="term" value="P:S-adenosylmethionine biosynthetic process"/>
    <property type="evidence" value="ECO:0007669"/>
    <property type="project" value="UniProtKB-UniRule"/>
</dbReference>
<dbReference type="Gene3D" id="3.30.300.10">
    <property type="match status" value="1"/>
</dbReference>
<dbReference type="Gene3D" id="3.30.300.280">
    <property type="entry name" value="S-adenosylmethionine synthetase, C-terminal domain"/>
    <property type="match status" value="2"/>
</dbReference>
<dbReference type="HAMAP" id="MF_00136">
    <property type="entry name" value="S_AdoMet_synth2"/>
    <property type="match status" value="1"/>
</dbReference>
<dbReference type="InterPro" id="IPR027790">
    <property type="entry name" value="AdoMet_synthase_2_family"/>
</dbReference>
<dbReference type="InterPro" id="IPR042544">
    <property type="entry name" value="AdoMet_synthase_3"/>
</dbReference>
<dbReference type="InterPro" id="IPR002795">
    <property type="entry name" value="S-AdoMet_synthetase_arc"/>
</dbReference>
<dbReference type="NCBIfam" id="NF003365">
    <property type="entry name" value="PRK04439.1-4"/>
    <property type="match status" value="1"/>
</dbReference>
<dbReference type="NCBIfam" id="NF003366">
    <property type="entry name" value="PRK04439.1-5"/>
    <property type="match status" value="1"/>
</dbReference>
<dbReference type="PANTHER" id="PTHR36697">
    <property type="entry name" value="S-ADENOSYLMETHIONINE SYNTHASE"/>
    <property type="match status" value="1"/>
</dbReference>
<dbReference type="PANTHER" id="PTHR36697:SF1">
    <property type="entry name" value="S-ADENOSYLMETHIONINE SYNTHASE"/>
    <property type="match status" value="1"/>
</dbReference>
<dbReference type="Pfam" id="PF01941">
    <property type="entry name" value="AdoMet_Synthase"/>
    <property type="match status" value="1"/>
</dbReference>
<organism>
    <name type="scientific">Saccharolobus islandicus (strain M.16.4 / Kamchatka #3)</name>
    <name type="common">Sulfolobus islandicus</name>
    <dbReference type="NCBI Taxonomy" id="426118"/>
    <lineage>
        <taxon>Archaea</taxon>
        <taxon>Thermoproteota</taxon>
        <taxon>Thermoprotei</taxon>
        <taxon>Sulfolobales</taxon>
        <taxon>Sulfolobaceae</taxon>
        <taxon>Saccharolobus</taxon>
    </lineage>
</organism>
<sequence>MRNINVQLNPLSDIEKLQVELVERKGLGHPDYIADAVAEEASRKLSLYYLKKYGVILHHNLDKTLVVGGQATPRFKGGDVIQPIYIVVAGRATTEVKTESGIEQIPVGTIIIESVKEWIRNNFRYLDAEKHLIVDYKIGKGSTDLVGIFEAGKRVPLSNDTSFGVGFAPFTKLEKLVYETERHLNSKQFKAKLPEVGEDIKVMGLRRGNEVDLTIAMATISELIEDVNHYINVKEQAKNEILDLASKIAPDYDVRIYVNTGDKIDKNILYLTVTGTSAEHGDDGMTGRGNRGVGLITPMRPMSLEATAGKNPVNHVGKLYNVLANLIANKIAQEVKDVKFSQVQVLGQIGRPIDDPLIANVDVITYDGKLNDETKNEISGIVDEMLSSFNKLTELILEGKATLF</sequence>
<protein>
    <recommendedName>
        <fullName evidence="1">S-adenosylmethionine synthase</fullName>
        <shortName evidence="1">AdoMet synthase</shortName>
        <ecNumber evidence="1">2.5.1.6</ecNumber>
    </recommendedName>
    <alternativeName>
        <fullName evidence="1">Methionine adenosyltransferase</fullName>
    </alternativeName>
</protein>
<feature type="chain" id="PRO_1000203215" description="S-adenosylmethionine synthase">
    <location>
        <begin position="1"/>
        <end position="404"/>
    </location>
</feature>
<feature type="binding site" evidence="1">
    <location>
        <begin position="139"/>
        <end position="144"/>
    </location>
    <ligand>
        <name>ATP</name>
        <dbReference type="ChEBI" id="CHEBI:30616"/>
    </ligand>
</feature>
<name>METK_SACI6</name>
<comment type="function">
    <text evidence="1">Catalyzes the formation of S-adenosylmethionine from methionine and ATP.</text>
</comment>
<comment type="catalytic activity">
    <reaction evidence="1">
        <text>L-methionine + ATP + H2O = S-adenosyl-L-methionine + phosphate + diphosphate</text>
        <dbReference type="Rhea" id="RHEA:21080"/>
        <dbReference type="ChEBI" id="CHEBI:15377"/>
        <dbReference type="ChEBI" id="CHEBI:30616"/>
        <dbReference type="ChEBI" id="CHEBI:33019"/>
        <dbReference type="ChEBI" id="CHEBI:43474"/>
        <dbReference type="ChEBI" id="CHEBI:57844"/>
        <dbReference type="ChEBI" id="CHEBI:59789"/>
        <dbReference type="EC" id="2.5.1.6"/>
    </reaction>
</comment>
<comment type="cofactor">
    <cofactor evidence="1">
        <name>Mg(2+)</name>
        <dbReference type="ChEBI" id="CHEBI:18420"/>
    </cofactor>
</comment>
<comment type="pathway">
    <text evidence="1">Amino-acid biosynthesis; S-adenosyl-L-methionine biosynthesis; S-adenosyl-L-methionine from L-methionine: step 1/1.</text>
</comment>
<comment type="similarity">
    <text evidence="1">Belongs to the AdoMet synthase 2 family.</text>
</comment>
<evidence type="ECO:0000255" key="1">
    <source>
        <dbReference type="HAMAP-Rule" id="MF_00136"/>
    </source>
</evidence>
<proteinExistence type="inferred from homology"/>
<gene>
    <name evidence="1" type="primary">mat</name>
    <name type="ordered locus">M164_1943</name>
</gene>